<accession>Q6GJ10</accession>
<keyword id="KW-0046">Antibiotic resistance</keyword>
<keyword id="KW-0067">ATP-binding</keyword>
<keyword id="KW-1003">Cell membrane</keyword>
<keyword id="KW-0418">Kinase</keyword>
<keyword id="KW-0472">Membrane</keyword>
<keyword id="KW-0547">Nucleotide-binding</keyword>
<keyword id="KW-0808">Transferase</keyword>
<keyword id="KW-0812">Transmembrane</keyword>
<keyword id="KW-1133">Transmembrane helix</keyword>
<keyword id="KW-0902">Two-component regulatory system</keyword>
<keyword id="KW-0843">Virulence</keyword>
<comment type="function">
    <text evidence="1">Member of the two-component regulatory system GraR/GraS involved in resistance against cationic antimicrobial peptides (CAMPs). Functions as a sensor protein kinase which phosphorylates GraR through the auxiliary protein GraX. In turn, GraR up-regulates many genes such as adhesins, exoproteins, transporters, toxins, and proteins involved in cell wall synthesis. Down-regulates the expression of many genes involved in RNA and amino acid synthesis or glycolysis.</text>
</comment>
<comment type="catalytic activity">
    <reaction>
        <text>ATP + protein L-histidine = ADP + protein N-phospho-L-histidine.</text>
        <dbReference type="EC" id="2.7.13.3"/>
    </reaction>
</comment>
<comment type="subunit">
    <text evidence="1">Interacts with GraX.</text>
</comment>
<comment type="subcellular location">
    <subcellularLocation>
        <location evidence="4">Cell membrane</location>
        <topology evidence="4">Multi-pass membrane protein</topology>
    </subcellularLocation>
</comment>
<organism>
    <name type="scientific">Staphylococcus aureus (strain MRSA252)</name>
    <dbReference type="NCBI Taxonomy" id="282458"/>
    <lineage>
        <taxon>Bacteria</taxon>
        <taxon>Bacillati</taxon>
        <taxon>Bacillota</taxon>
        <taxon>Bacilli</taxon>
        <taxon>Bacillales</taxon>
        <taxon>Staphylococcaceae</taxon>
        <taxon>Staphylococcus</taxon>
    </lineage>
</organism>
<evidence type="ECO:0000250" key="1">
    <source>
        <dbReference type="UniProtKB" id="Q2G0D9"/>
    </source>
</evidence>
<evidence type="ECO:0000255" key="2"/>
<evidence type="ECO:0000255" key="3">
    <source>
        <dbReference type="PROSITE-ProRule" id="PRU00107"/>
    </source>
</evidence>
<evidence type="ECO:0000305" key="4"/>
<feature type="chain" id="PRO_0000347917" description="Sensor protein kinase GraS">
    <location>
        <begin position="1"/>
        <end position="346"/>
    </location>
</feature>
<feature type="transmembrane region" description="Helical" evidence="2">
    <location>
        <begin position="18"/>
        <end position="38"/>
    </location>
</feature>
<feature type="transmembrane region" description="Helical" evidence="2">
    <location>
        <begin position="43"/>
        <end position="63"/>
    </location>
</feature>
<feature type="domain" description="Histidine kinase" evidence="3">
    <location>
        <begin position="126"/>
        <end position="332"/>
    </location>
</feature>
<reference key="1">
    <citation type="journal article" date="2004" name="Proc. Natl. Acad. Sci. U.S.A.">
        <title>Complete genomes of two clinical Staphylococcus aureus strains: evidence for the rapid evolution of virulence and drug resistance.</title>
        <authorList>
            <person name="Holden M.T.G."/>
            <person name="Feil E.J."/>
            <person name="Lindsay J.A."/>
            <person name="Peacock S.J."/>
            <person name="Day N.P.J."/>
            <person name="Enright M.C."/>
            <person name="Foster T.J."/>
            <person name="Moore C.E."/>
            <person name="Hurst L."/>
            <person name="Atkin R."/>
            <person name="Barron A."/>
            <person name="Bason N."/>
            <person name="Bentley S.D."/>
            <person name="Chillingworth C."/>
            <person name="Chillingworth T."/>
            <person name="Churcher C."/>
            <person name="Clark L."/>
            <person name="Corton C."/>
            <person name="Cronin A."/>
            <person name="Doggett J."/>
            <person name="Dowd L."/>
            <person name="Feltwell T."/>
            <person name="Hance Z."/>
            <person name="Harris B."/>
            <person name="Hauser H."/>
            <person name="Holroyd S."/>
            <person name="Jagels K."/>
            <person name="James K.D."/>
            <person name="Lennard N."/>
            <person name="Line A."/>
            <person name="Mayes R."/>
            <person name="Moule S."/>
            <person name="Mungall K."/>
            <person name="Ormond D."/>
            <person name="Quail M.A."/>
            <person name="Rabbinowitsch E."/>
            <person name="Rutherford K.M."/>
            <person name="Sanders M."/>
            <person name="Sharp S."/>
            <person name="Simmonds M."/>
            <person name="Stevens K."/>
            <person name="Whitehead S."/>
            <person name="Barrell B.G."/>
            <person name="Spratt B.G."/>
            <person name="Parkhill J."/>
        </authorList>
    </citation>
    <scope>NUCLEOTIDE SEQUENCE [LARGE SCALE GENOMIC DNA]</scope>
    <source>
        <strain>MRSA252</strain>
    </source>
</reference>
<name>GRAS_STAAR</name>
<proteinExistence type="inferred from homology"/>
<protein>
    <recommendedName>
        <fullName>Sensor protein kinase GraS</fullName>
        <ecNumber>2.7.13.3</ecNumber>
    </recommendedName>
    <alternativeName>
        <fullName>Glycopeptide resistance-associated protein S</fullName>
    </alternativeName>
</protein>
<gene>
    <name type="primary">graS</name>
    <name type="ordered locus">SAR0670</name>
</gene>
<dbReference type="EC" id="2.7.13.3"/>
<dbReference type="EMBL" id="BX571856">
    <property type="protein sequence ID" value="CAG39687.1"/>
    <property type="molecule type" value="Genomic_DNA"/>
</dbReference>
<dbReference type="RefSeq" id="WP_001061270.1">
    <property type="nucleotide sequence ID" value="NC_002952.2"/>
</dbReference>
<dbReference type="SMR" id="Q6GJ10"/>
<dbReference type="KEGG" id="sar:SAR0670"/>
<dbReference type="HOGENOM" id="CLU_000445_13_1_9"/>
<dbReference type="Proteomes" id="UP000000596">
    <property type="component" value="Chromosome"/>
</dbReference>
<dbReference type="GO" id="GO:0005886">
    <property type="term" value="C:plasma membrane"/>
    <property type="evidence" value="ECO:0007669"/>
    <property type="project" value="UniProtKB-SubCell"/>
</dbReference>
<dbReference type="GO" id="GO:0005524">
    <property type="term" value="F:ATP binding"/>
    <property type="evidence" value="ECO:0007669"/>
    <property type="project" value="UniProtKB-KW"/>
</dbReference>
<dbReference type="GO" id="GO:0004721">
    <property type="term" value="F:phosphoprotein phosphatase activity"/>
    <property type="evidence" value="ECO:0007669"/>
    <property type="project" value="TreeGrafter"/>
</dbReference>
<dbReference type="GO" id="GO:0000155">
    <property type="term" value="F:phosphorelay sensor kinase activity"/>
    <property type="evidence" value="ECO:0007669"/>
    <property type="project" value="InterPro"/>
</dbReference>
<dbReference type="GO" id="GO:0016036">
    <property type="term" value="P:cellular response to phosphate starvation"/>
    <property type="evidence" value="ECO:0007669"/>
    <property type="project" value="TreeGrafter"/>
</dbReference>
<dbReference type="GO" id="GO:0046677">
    <property type="term" value="P:response to antibiotic"/>
    <property type="evidence" value="ECO:0007669"/>
    <property type="project" value="UniProtKB-KW"/>
</dbReference>
<dbReference type="Gene3D" id="3.30.565.10">
    <property type="entry name" value="Histidine kinase-like ATPase, C-terminal domain"/>
    <property type="match status" value="1"/>
</dbReference>
<dbReference type="InterPro" id="IPR050351">
    <property type="entry name" value="2-comp_sensor_kinase"/>
</dbReference>
<dbReference type="InterPro" id="IPR036890">
    <property type="entry name" value="HATPase_C_sf"/>
</dbReference>
<dbReference type="InterPro" id="IPR005467">
    <property type="entry name" value="His_kinase_dom"/>
</dbReference>
<dbReference type="InterPro" id="IPR036097">
    <property type="entry name" value="HisK_dim/P_sf"/>
</dbReference>
<dbReference type="InterPro" id="IPR004358">
    <property type="entry name" value="Sig_transdc_His_kin-like_C"/>
</dbReference>
<dbReference type="PANTHER" id="PTHR45453:SF2">
    <property type="entry name" value="HISTIDINE KINASE"/>
    <property type="match status" value="1"/>
</dbReference>
<dbReference type="PANTHER" id="PTHR45453">
    <property type="entry name" value="PHOSPHATE REGULON SENSOR PROTEIN PHOR"/>
    <property type="match status" value="1"/>
</dbReference>
<dbReference type="Pfam" id="PF02518">
    <property type="entry name" value="HATPase_c"/>
    <property type="match status" value="1"/>
</dbReference>
<dbReference type="PRINTS" id="PR00344">
    <property type="entry name" value="BCTRLSENSOR"/>
</dbReference>
<dbReference type="SMART" id="SM00387">
    <property type="entry name" value="HATPase_c"/>
    <property type="match status" value="1"/>
</dbReference>
<dbReference type="SUPFAM" id="SSF55874">
    <property type="entry name" value="ATPase domain of HSP90 chaperone/DNA topoisomerase II/histidine kinase"/>
    <property type="match status" value="1"/>
</dbReference>
<dbReference type="SUPFAM" id="SSF47384">
    <property type="entry name" value="Homodimeric domain of signal transducing histidine kinase"/>
    <property type="match status" value="1"/>
</dbReference>
<dbReference type="PROSITE" id="PS50109">
    <property type="entry name" value="HIS_KIN"/>
    <property type="match status" value="1"/>
</dbReference>
<sequence>MNNLKWVVYFLKSRKNWIFWILFLNILMLGISLIDYDFPIDSLFYIVSLNLSLTLIFLILTFFKEVKLYRHFEKDKEIEEIKHKDLAETPFQRHTVDYLYRQILAHKDKVVDQQLQLNMHEQTITEFVHDIKTPVTAMKLLIDQEENQERKQALLFEWSRINSMLDTQLYITRLESQRKDMFFDYVSLKRMVIDEIQLTRHISQVKGIGFDIDFKVDNHVYTDIKWCRMIIRQILSNALKYSENYNVDISTELIDQHVALIIKDHGRGISKKDMPRIFERGFTSTANRNETTSSGMGLYLVDSVKDQLGIQLQVTSTIGKGTTVKLIFPLQNEIVERMSEVTNLSF</sequence>